<evidence type="ECO:0000255" key="1">
    <source>
        <dbReference type="HAMAP-Rule" id="MF_00102"/>
    </source>
</evidence>
<evidence type="ECO:0000305" key="2"/>
<keyword id="KW-0028">Amino-acid biosynthesis</keyword>
<keyword id="KW-0963">Cytoplasm</keyword>
<keyword id="KW-0220">Diaminopimelate biosynthesis</keyword>
<keyword id="KW-0457">Lysine biosynthesis</keyword>
<keyword id="KW-0520">NAD</keyword>
<keyword id="KW-0521">NADP</keyword>
<keyword id="KW-0560">Oxidoreductase</keyword>
<feature type="chain" id="PRO_1000118846" description="4-hydroxy-tetrahydrodipicolinate reductase">
    <location>
        <begin position="1"/>
        <end position="269"/>
    </location>
</feature>
<feature type="active site" description="Proton donor/acceptor" evidence="1">
    <location>
        <position position="158"/>
    </location>
</feature>
<feature type="active site" description="Proton donor" evidence="1">
    <location>
        <position position="162"/>
    </location>
</feature>
<feature type="binding site" evidence="1">
    <location>
        <begin position="11"/>
        <end position="16"/>
    </location>
    <ligand>
        <name>NAD(+)</name>
        <dbReference type="ChEBI" id="CHEBI:57540"/>
    </ligand>
</feature>
<feature type="binding site" evidence="1">
    <location>
        <position position="39"/>
    </location>
    <ligand>
        <name>NADP(+)</name>
        <dbReference type="ChEBI" id="CHEBI:58349"/>
    </ligand>
</feature>
<feature type="binding site" evidence="1">
    <location>
        <begin position="101"/>
        <end position="103"/>
    </location>
    <ligand>
        <name>NAD(+)</name>
        <dbReference type="ChEBI" id="CHEBI:57540"/>
    </ligand>
</feature>
<feature type="binding site" evidence="1">
    <location>
        <begin position="125"/>
        <end position="128"/>
    </location>
    <ligand>
        <name>NAD(+)</name>
        <dbReference type="ChEBI" id="CHEBI:57540"/>
    </ligand>
</feature>
<feature type="binding site" evidence="1">
    <location>
        <position position="159"/>
    </location>
    <ligand>
        <name>(S)-2,3,4,5-tetrahydrodipicolinate</name>
        <dbReference type="ChEBI" id="CHEBI:16845"/>
    </ligand>
</feature>
<feature type="binding site" evidence="1">
    <location>
        <begin position="168"/>
        <end position="169"/>
    </location>
    <ligand>
        <name>(S)-2,3,4,5-tetrahydrodipicolinate</name>
        <dbReference type="ChEBI" id="CHEBI:16845"/>
    </ligand>
</feature>
<name>DAPB_BUCA5</name>
<proteinExistence type="inferred from homology"/>
<accession>B8D8U7</accession>
<organism>
    <name type="scientific">Buchnera aphidicola subsp. Acyrthosiphon pisum (strain 5A)</name>
    <dbReference type="NCBI Taxonomy" id="563178"/>
    <lineage>
        <taxon>Bacteria</taxon>
        <taxon>Pseudomonadati</taxon>
        <taxon>Pseudomonadota</taxon>
        <taxon>Gammaproteobacteria</taxon>
        <taxon>Enterobacterales</taxon>
        <taxon>Erwiniaceae</taxon>
        <taxon>Buchnera</taxon>
    </lineage>
</organism>
<dbReference type="EC" id="1.17.1.8" evidence="1"/>
<dbReference type="EMBL" id="CP001161">
    <property type="protein sequence ID" value="ACL30519.1"/>
    <property type="molecule type" value="Genomic_DNA"/>
</dbReference>
<dbReference type="RefSeq" id="WP_009874102.1">
    <property type="nucleotide sequence ID" value="NC_011833.1"/>
</dbReference>
<dbReference type="SMR" id="B8D8U7"/>
<dbReference type="KEGG" id="bap:BUAP5A_144"/>
<dbReference type="HOGENOM" id="CLU_047479_2_1_6"/>
<dbReference type="OrthoDB" id="9790352at2"/>
<dbReference type="UniPathway" id="UPA00034">
    <property type="reaction ID" value="UER00018"/>
</dbReference>
<dbReference type="Proteomes" id="UP000006904">
    <property type="component" value="Chromosome"/>
</dbReference>
<dbReference type="GO" id="GO:0005829">
    <property type="term" value="C:cytosol"/>
    <property type="evidence" value="ECO:0007669"/>
    <property type="project" value="TreeGrafter"/>
</dbReference>
<dbReference type="GO" id="GO:0008839">
    <property type="term" value="F:4-hydroxy-tetrahydrodipicolinate reductase"/>
    <property type="evidence" value="ECO:0007669"/>
    <property type="project" value="UniProtKB-EC"/>
</dbReference>
<dbReference type="GO" id="GO:0051287">
    <property type="term" value="F:NAD binding"/>
    <property type="evidence" value="ECO:0007669"/>
    <property type="project" value="UniProtKB-UniRule"/>
</dbReference>
<dbReference type="GO" id="GO:0050661">
    <property type="term" value="F:NADP binding"/>
    <property type="evidence" value="ECO:0007669"/>
    <property type="project" value="UniProtKB-UniRule"/>
</dbReference>
<dbReference type="GO" id="GO:0016726">
    <property type="term" value="F:oxidoreductase activity, acting on CH or CH2 groups, NAD or NADP as acceptor"/>
    <property type="evidence" value="ECO:0007669"/>
    <property type="project" value="UniProtKB-UniRule"/>
</dbReference>
<dbReference type="GO" id="GO:0019877">
    <property type="term" value="P:diaminopimelate biosynthetic process"/>
    <property type="evidence" value="ECO:0007669"/>
    <property type="project" value="UniProtKB-UniRule"/>
</dbReference>
<dbReference type="GO" id="GO:0009089">
    <property type="term" value="P:lysine biosynthetic process via diaminopimelate"/>
    <property type="evidence" value="ECO:0007669"/>
    <property type="project" value="UniProtKB-UniRule"/>
</dbReference>
<dbReference type="CDD" id="cd02274">
    <property type="entry name" value="DHDPR_N"/>
    <property type="match status" value="1"/>
</dbReference>
<dbReference type="FunFam" id="3.30.360.10:FF:000004">
    <property type="entry name" value="4-hydroxy-tetrahydrodipicolinate reductase"/>
    <property type="match status" value="1"/>
</dbReference>
<dbReference type="Gene3D" id="3.30.360.10">
    <property type="entry name" value="Dihydrodipicolinate Reductase, domain 2"/>
    <property type="match status" value="1"/>
</dbReference>
<dbReference type="Gene3D" id="3.40.50.720">
    <property type="entry name" value="NAD(P)-binding Rossmann-like Domain"/>
    <property type="match status" value="1"/>
</dbReference>
<dbReference type="HAMAP" id="MF_00102">
    <property type="entry name" value="DapB"/>
    <property type="match status" value="1"/>
</dbReference>
<dbReference type="InterPro" id="IPR022663">
    <property type="entry name" value="DapB_C"/>
</dbReference>
<dbReference type="InterPro" id="IPR000846">
    <property type="entry name" value="DapB_N"/>
</dbReference>
<dbReference type="InterPro" id="IPR022664">
    <property type="entry name" value="DapB_N_CS"/>
</dbReference>
<dbReference type="InterPro" id="IPR023940">
    <property type="entry name" value="DHDPR_bac"/>
</dbReference>
<dbReference type="InterPro" id="IPR036291">
    <property type="entry name" value="NAD(P)-bd_dom_sf"/>
</dbReference>
<dbReference type="NCBIfam" id="TIGR00036">
    <property type="entry name" value="dapB"/>
    <property type="match status" value="1"/>
</dbReference>
<dbReference type="PANTHER" id="PTHR20836:SF0">
    <property type="entry name" value="4-HYDROXY-TETRAHYDRODIPICOLINATE REDUCTASE 1, CHLOROPLASTIC-RELATED"/>
    <property type="match status" value="1"/>
</dbReference>
<dbReference type="PANTHER" id="PTHR20836">
    <property type="entry name" value="DIHYDRODIPICOLINATE REDUCTASE"/>
    <property type="match status" value="1"/>
</dbReference>
<dbReference type="Pfam" id="PF05173">
    <property type="entry name" value="DapB_C"/>
    <property type="match status" value="1"/>
</dbReference>
<dbReference type="Pfam" id="PF01113">
    <property type="entry name" value="DapB_N"/>
    <property type="match status" value="1"/>
</dbReference>
<dbReference type="PIRSF" id="PIRSF000161">
    <property type="entry name" value="DHPR"/>
    <property type="match status" value="1"/>
</dbReference>
<dbReference type="SUPFAM" id="SSF55347">
    <property type="entry name" value="Glyceraldehyde-3-phosphate dehydrogenase-like, C-terminal domain"/>
    <property type="match status" value="1"/>
</dbReference>
<dbReference type="SUPFAM" id="SSF51735">
    <property type="entry name" value="NAD(P)-binding Rossmann-fold domains"/>
    <property type="match status" value="1"/>
</dbReference>
<dbReference type="PROSITE" id="PS01298">
    <property type="entry name" value="DAPB"/>
    <property type="match status" value="1"/>
</dbReference>
<gene>
    <name evidence="1" type="primary">dapB</name>
    <name type="ordered locus">BUAP5A_144</name>
</gene>
<protein>
    <recommendedName>
        <fullName evidence="1">4-hydroxy-tetrahydrodipicolinate reductase</fullName>
        <shortName evidence="1">HTPA reductase</shortName>
        <ecNumber evidence="1">1.17.1.8</ecNumber>
    </recommendedName>
</protein>
<sequence>MNKKTRIAITGPIGRMGRMLIKEIQNNKHSHLTVAVVQKKHQLIGQDIGRIIGIGEIGVLISDELNIKKNDFDVLIDFTRPAGTLEYLKYCNKFKKNIVIGTTGFSKEEIDIIKSYSQKIAIIIASNFSIGINLLFQLIKKTTQIIGKDSDINILEYHHRNKIDAPSGTALEIGEVISKVMNWNLNQDSIYYQKGITGIRDAKKIGFSIVRAGNIVGKHTVMFSSCDEEIKITHTASNRMSFARGAIQSALWIHKKNTGLFDMTDVLSL</sequence>
<reference key="1">
    <citation type="journal article" date="2009" name="Science">
        <title>The dynamics and time scale of ongoing genomic erosion in symbiotic bacteria.</title>
        <authorList>
            <person name="Moran N.A."/>
            <person name="McLaughlin H.J."/>
            <person name="Sorek R."/>
        </authorList>
    </citation>
    <scope>NUCLEOTIDE SEQUENCE [LARGE SCALE GENOMIC DNA]</scope>
    <source>
        <strain>5A</strain>
    </source>
</reference>
<comment type="function">
    <text evidence="1">Catalyzes the conversion of 4-hydroxy-tetrahydrodipicolinate (HTPA) to tetrahydrodipicolinate.</text>
</comment>
<comment type="catalytic activity">
    <reaction evidence="1">
        <text>(S)-2,3,4,5-tetrahydrodipicolinate + NAD(+) + H2O = (2S,4S)-4-hydroxy-2,3,4,5-tetrahydrodipicolinate + NADH + H(+)</text>
        <dbReference type="Rhea" id="RHEA:35323"/>
        <dbReference type="ChEBI" id="CHEBI:15377"/>
        <dbReference type="ChEBI" id="CHEBI:15378"/>
        <dbReference type="ChEBI" id="CHEBI:16845"/>
        <dbReference type="ChEBI" id="CHEBI:57540"/>
        <dbReference type="ChEBI" id="CHEBI:57945"/>
        <dbReference type="ChEBI" id="CHEBI:67139"/>
        <dbReference type="EC" id="1.17.1.8"/>
    </reaction>
</comment>
<comment type="catalytic activity">
    <reaction evidence="1">
        <text>(S)-2,3,4,5-tetrahydrodipicolinate + NADP(+) + H2O = (2S,4S)-4-hydroxy-2,3,4,5-tetrahydrodipicolinate + NADPH + H(+)</text>
        <dbReference type="Rhea" id="RHEA:35331"/>
        <dbReference type="ChEBI" id="CHEBI:15377"/>
        <dbReference type="ChEBI" id="CHEBI:15378"/>
        <dbReference type="ChEBI" id="CHEBI:16845"/>
        <dbReference type="ChEBI" id="CHEBI:57783"/>
        <dbReference type="ChEBI" id="CHEBI:58349"/>
        <dbReference type="ChEBI" id="CHEBI:67139"/>
        <dbReference type="EC" id="1.17.1.8"/>
    </reaction>
</comment>
<comment type="pathway">
    <text evidence="1">Amino-acid biosynthesis; L-lysine biosynthesis via DAP pathway; (S)-tetrahydrodipicolinate from L-aspartate: step 4/4.</text>
</comment>
<comment type="subunit">
    <text evidence="1">Homotetramer.</text>
</comment>
<comment type="subcellular location">
    <subcellularLocation>
        <location evidence="1">Cytoplasm</location>
    </subcellularLocation>
</comment>
<comment type="similarity">
    <text evidence="1">Belongs to the DapB family.</text>
</comment>
<comment type="caution">
    <text evidence="2">Was originally thought to be a dihydrodipicolinate reductase (DHDPR), catalyzing the conversion of dihydrodipicolinate to tetrahydrodipicolinate. However, it was shown in E.coli that the substrate of the enzymatic reaction is not dihydrodipicolinate (DHDP) but in fact (2S,4S)-4-hydroxy-2,3,4,5-tetrahydrodipicolinic acid (HTPA), the product released by the DapA-catalyzed reaction.</text>
</comment>